<reference key="1">
    <citation type="journal article" date="1989" name="Mol. Gen. Genet.">
        <title>Cloning and analysis of the nuclear genes for two mitochondrial ribosomal proteins in yeast.</title>
        <authorList>
            <person name="Matsushita Y."/>
            <person name="Kitakawa M."/>
            <person name="Isono K."/>
        </authorList>
    </citation>
    <scope>NUCLEOTIDE SEQUENCE [GENOMIC DNA]</scope>
    <scope>PROTEIN SEQUENCE OF 9-32</scope>
    <scope>SUBUNIT</scope>
    <source>
        <strain>ATCC 64665 / S288c / DC5</strain>
    </source>
</reference>
<reference key="2">
    <citation type="journal article" date="1995" name="Nat. Genet.">
        <title>Analysis of the nucleotide sequence of chromosome VI from Saccharomyces cerevisiae.</title>
        <authorList>
            <person name="Murakami Y."/>
            <person name="Naitou M."/>
            <person name="Hagiwara H."/>
            <person name="Shibata T."/>
            <person name="Ozawa M."/>
            <person name="Sasanuma S."/>
            <person name="Sasanuma M."/>
            <person name="Tsuchiya Y."/>
            <person name="Soeda E."/>
            <person name="Yokoyama K."/>
            <person name="Yamazaki M."/>
            <person name="Tashiro H."/>
            <person name="Eki T."/>
        </authorList>
    </citation>
    <scope>NUCLEOTIDE SEQUENCE [LARGE SCALE GENOMIC DNA]</scope>
    <source>
        <strain>ATCC 204508 / S288c</strain>
    </source>
</reference>
<reference key="3">
    <citation type="journal article" date="2014" name="G3 (Bethesda)">
        <title>The reference genome sequence of Saccharomyces cerevisiae: Then and now.</title>
        <authorList>
            <person name="Engel S.R."/>
            <person name="Dietrich F.S."/>
            <person name="Fisk D.G."/>
            <person name="Binkley G."/>
            <person name="Balakrishnan R."/>
            <person name="Costanzo M.C."/>
            <person name="Dwight S.S."/>
            <person name="Hitz B.C."/>
            <person name="Karra K."/>
            <person name="Nash R.S."/>
            <person name="Weng S."/>
            <person name="Wong E.D."/>
            <person name="Lloyd P."/>
            <person name="Skrzypek M.S."/>
            <person name="Miyasato S.R."/>
            <person name="Simison M."/>
            <person name="Cherry J.M."/>
        </authorList>
    </citation>
    <scope>GENOME REANNOTATION</scope>
    <source>
        <strain>ATCC 204508 / S288c</strain>
    </source>
</reference>
<reference key="4">
    <citation type="journal article" date="1996" name="Yeast">
        <title>Analysis of a 36.2 kb DNA sequence including the right telomere of chromosome VI from Saccharomyces cerevisiae.</title>
        <authorList>
            <person name="Eki T."/>
            <person name="Naitou M."/>
            <person name="Hagiwara H."/>
            <person name="Ozawa M."/>
            <person name="Sasanuma S."/>
            <person name="Sasanuma M."/>
            <person name="Tsuchiya Y."/>
            <person name="Shibata T."/>
            <person name="Hanaoka F."/>
            <person name="Murakami Y."/>
        </authorList>
    </citation>
    <scope>NUCLEOTIDE SEQUENCE [GENOMIC DNA]</scope>
    <source>
        <strain>ATCC 204511 / S288c / AB972</strain>
    </source>
</reference>
<reference key="5">
    <citation type="journal article" date="2007" name="Genome Res.">
        <title>Approaching a complete repository of sequence-verified protein-encoding clones for Saccharomyces cerevisiae.</title>
        <authorList>
            <person name="Hu Y."/>
            <person name="Rolfs A."/>
            <person name="Bhullar B."/>
            <person name="Murthy T.V.S."/>
            <person name="Zhu C."/>
            <person name="Berger M.F."/>
            <person name="Camargo A.A."/>
            <person name="Kelley F."/>
            <person name="McCarron S."/>
            <person name="Jepson D."/>
            <person name="Richardson A."/>
            <person name="Raphael J."/>
            <person name="Moreira D."/>
            <person name="Taycher E."/>
            <person name="Zuo D."/>
            <person name="Mohr S."/>
            <person name="Kane M.F."/>
            <person name="Williamson J."/>
            <person name="Simpson A.J.G."/>
            <person name="Bulyk M.L."/>
            <person name="Harlow E."/>
            <person name="Marsischky G."/>
            <person name="Kolodner R.D."/>
            <person name="LaBaer J."/>
        </authorList>
    </citation>
    <scope>NUCLEOTIDE SEQUENCE [GENOMIC DNA]</scope>
    <source>
        <strain>ATCC 204508 / S288c</strain>
    </source>
</reference>
<reference key="6">
    <citation type="journal article" date="2003" name="Nature">
        <title>Global analysis of protein localization in budding yeast.</title>
        <authorList>
            <person name="Huh W.-K."/>
            <person name="Falvo J.V."/>
            <person name="Gerke L.C."/>
            <person name="Carroll A.S."/>
            <person name="Howson R.W."/>
            <person name="Weissman J.S."/>
            <person name="O'Shea E.K."/>
        </authorList>
    </citation>
    <scope>SUBCELLULAR LOCATION [LARGE SCALE ANALYSIS]</scope>
</reference>
<reference key="7">
    <citation type="journal article" date="2003" name="Nature">
        <title>Global analysis of protein expression in yeast.</title>
        <authorList>
            <person name="Ghaemmaghami S."/>
            <person name="Huh W.-K."/>
            <person name="Bower K."/>
            <person name="Howson R.W."/>
            <person name="Belle A."/>
            <person name="Dephoure N."/>
            <person name="O'Shea E.K."/>
            <person name="Weissman J.S."/>
        </authorList>
    </citation>
    <scope>LEVEL OF PROTEIN EXPRESSION [LARGE SCALE ANALYSIS]</scope>
</reference>
<reference key="8">
    <citation type="journal article" date="2003" name="Proc. Natl. Acad. Sci. U.S.A.">
        <title>The proteome of Saccharomyces cerevisiae mitochondria.</title>
        <authorList>
            <person name="Sickmann A."/>
            <person name="Reinders J."/>
            <person name="Wagner Y."/>
            <person name="Joppich C."/>
            <person name="Zahedi R.P."/>
            <person name="Meyer H.E."/>
            <person name="Schoenfisch B."/>
            <person name="Perschil I."/>
            <person name="Chacinska A."/>
            <person name="Guiard B."/>
            <person name="Rehling P."/>
            <person name="Pfanner N."/>
            <person name="Meisinger C."/>
        </authorList>
    </citation>
    <scope>SUBCELLULAR LOCATION [LARGE SCALE ANALYSIS]</scope>
    <source>
        <strain>ATCC 76625 / YPH499</strain>
    </source>
</reference>
<reference key="9">
    <citation type="journal article" date="2014" name="Mol. Biol. Cell">
        <title>The novel component Kgd4 recruits the E3 subunit to the mitochondrial alpha-ketoglutarate dehydrogenase.</title>
        <authorList>
            <person name="Heublein M."/>
            <person name="Burguillos M.A."/>
            <person name="Voegtle F.N."/>
            <person name="Teixeira P.F."/>
            <person name="Imhof A."/>
            <person name="Meisinger C."/>
            <person name="Ott M."/>
        </authorList>
    </citation>
    <scope>FUNCTION</scope>
    <scope>SUBUNIT</scope>
    <scope>SUBCELLULAR LOCATION</scope>
    <scope>DISRUPTION PHENOTYPE</scope>
</reference>
<reference key="10">
    <citation type="journal article" date="2019" name="J. Mol. Biol.">
        <title>Alternative translation initiation at a UUG codon gives rise to two functional variants of the mitochondrial protein Kgd4.</title>
        <authorList>
            <person name="Heublein M."/>
            <person name="Ndi M."/>
            <person name="Vazquez-Calvo C."/>
            <person name="Voegtle F.N."/>
            <person name="Ott M."/>
        </authorList>
    </citation>
    <scope>ALTERNATIVE INITIATION</scope>
</reference>
<name>KGD4_YEAST</name>
<dbReference type="EMBL" id="X17540">
    <property type="protein sequence ID" value="CAA35577.1"/>
    <property type="molecule type" value="Genomic_DNA"/>
</dbReference>
<dbReference type="EMBL" id="D50617">
    <property type="protein sequence ID" value="BAA09288.1"/>
    <property type="molecule type" value="Genomic_DNA"/>
</dbReference>
<dbReference type="EMBL" id="AY558475">
    <property type="protein sequence ID" value="AAS56801.1"/>
    <property type="molecule type" value="Genomic_DNA"/>
</dbReference>
<dbReference type="EMBL" id="BK006940">
    <property type="protein sequence ID" value="DAA12492.1"/>
    <property type="molecule type" value="Genomic_DNA"/>
</dbReference>
<dbReference type="PIR" id="JQ0368">
    <property type="entry name" value="JQ0368"/>
</dbReference>
<dbReference type="RefSeq" id="NP_116707.3">
    <molecule id="P19955-1"/>
    <property type="nucleotide sequence ID" value="NM_001180014.3"/>
</dbReference>
<dbReference type="BioGRID" id="31207">
    <property type="interactions" value="60"/>
</dbReference>
<dbReference type="ComplexPortal" id="CPX-1293">
    <property type="entry name" value="Mitochondrial 2-oxoglutarate dehydrogenase complex"/>
</dbReference>
<dbReference type="DIP" id="DIP-5447N"/>
<dbReference type="FunCoup" id="P19955">
    <property type="interactions" value="114"/>
</dbReference>
<dbReference type="IntAct" id="P19955">
    <property type="interactions" value="7"/>
</dbReference>
<dbReference type="MINT" id="P19955"/>
<dbReference type="STRING" id="4932.YFR049W"/>
<dbReference type="iPTMnet" id="P19955"/>
<dbReference type="PaxDb" id="4932-YFR049W"/>
<dbReference type="PeptideAtlas" id="P19955"/>
<dbReference type="EnsemblFungi" id="YFR049W_mRNA">
    <molecule id="P19955-1"/>
    <property type="protein sequence ID" value="YFR049W"/>
    <property type="gene ID" value="YFR049W"/>
</dbReference>
<dbReference type="GeneID" id="850610"/>
<dbReference type="KEGG" id="sce:YFR049W"/>
<dbReference type="AGR" id="SGD:S000001945"/>
<dbReference type="SGD" id="S000001945">
    <property type="gene designation" value="YMR31"/>
</dbReference>
<dbReference type="VEuPathDB" id="FungiDB:YFR049W"/>
<dbReference type="eggNOG" id="ENOG502S4IB">
    <property type="taxonomic scope" value="Eukaryota"/>
</dbReference>
<dbReference type="HOGENOM" id="CLU_1981974_0_0_1"/>
<dbReference type="InParanoid" id="P19955"/>
<dbReference type="OMA" id="AYEPMIK"/>
<dbReference type="OrthoDB" id="2116030at2759"/>
<dbReference type="BioCyc" id="YEAST:G3O-30495-MONOMER"/>
<dbReference type="Reactome" id="R-SCE-6783984">
    <property type="pathway name" value="Glycine degradation"/>
</dbReference>
<dbReference type="Reactome" id="R-SCE-9853506">
    <property type="pathway name" value="OGDH complex synthesizes succinyl-CoA from 2-OG"/>
</dbReference>
<dbReference type="BioGRID-ORCS" id="850610">
    <property type="hits" value="10 hits in 10 CRISPR screens"/>
</dbReference>
<dbReference type="PRO" id="PR:P19955"/>
<dbReference type="Proteomes" id="UP000002311">
    <property type="component" value="Chromosome VI"/>
</dbReference>
<dbReference type="RNAct" id="P19955">
    <property type="molecule type" value="protein"/>
</dbReference>
<dbReference type="GO" id="GO:0005761">
    <property type="term" value="C:mitochondrial ribosome"/>
    <property type="evidence" value="ECO:0000314"/>
    <property type="project" value="SGD"/>
</dbReference>
<dbReference type="GO" id="GO:0005739">
    <property type="term" value="C:mitochondrion"/>
    <property type="evidence" value="ECO:0000314"/>
    <property type="project" value="ComplexPortal"/>
</dbReference>
<dbReference type="GO" id="GO:0045252">
    <property type="term" value="C:oxoglutarate dehydrogenase complex"/>
    <property type="evidence" value="ECO:0000314"/>
    <property type="project" value="SGD"/>
</dbReference>
<dbReference type="GO" id="GO:0003735">
    <property type="term" value="F:structural constituent of ribosome"/>
    <property type="evidence" value="ECO:0000314"/>
    <property type="project" value="SGD"/>
</dbReference>
<dbReference type="GO" id="GO:0006103">
    <property type="term" value="P:2-oxoglutarate metabolic process"/>
    <property type="evidence" value="ECO:0000314"/>
    <property type="project" value="ComplexPortal"/>
</dbReference>
<dbReference type="GO" id="GO:0006099">
    <property type="term" value="P:tricarboxylic acid cycle"/>
    <property type="evidence" value="ECO:0000315"/>
    <property type="project" value="SGD"/>
</dbReference>
<dbReference type="InterPro" id="IPR020373">
    <property type="entry name" value="Kgd4/YMR-31"/>
</dbReference>
<dbReference type="PANTHER" id="PTHR31601">
    <property type="entry name" value="28S RIBOSOMAL PROTEIN S36, MITOCHONDRIAL"/>
    <property type="match status" value="1"/>
</dbReference>
<dbReference type="PANTHER" id="PTHR31601:SF2">
    <property type="entry name" value="ALPHA-KETOGLUTARATE DEHYDROGENASE COMPONENT 4"/>
    <property type="match status" value="1"/>
</dbReference>
<dbReference type="Pfam" id="PF10937">
    <property type="entry name" value="Kgd4-YMR31"/>
    <property type="match status" value="1"/>
</dbReference>
<sequence length="123" mass="13689">MIATPIRLAKSAYEPMIKFVGTRHPLVKHATEVVVHPCATNGMLPGSKECIPVSKFMENYKPFRVVPIKHSANAGLSSSKTSVFVNRPLQKDELASIFELPARFRYKPINEHELESINSGGAW</sequence>
<protein>
    <recommendedName>
        <fullName evidence="7">Alpha-ketoglutarate dehydrogenase subunit 4, mitochondrial</fullName>
        <shortName>alpha-KGDH subunit 4</shortName>
    </recommendedName>
    <alternativeName>
        <fullName>2-oxoglutarate dehydrogenase complex component 4</fullName>
        <shortName>OGDHC subunit 4</shortName>
    </alternativeName>
</protein>
<comment type="function">
    <text evidence="4">Molecular adapter that is necessary to a form a stable 2-oxoglutarate dehydrogenase enzyme complex (OGDC). Required for incorporation of the E3 subunit (LPD1) into the E1-E2 core (KGD1-KGD2) of mitochondrial OGDC, and acting as a stability factor for the fully assembled complex.</text>
</comment>
<comment type="subunit">
    <text evidence="4">Component of the 2-oxoglutarate dehydrogenase complex (OGDC), also called alpha-ketoglutarate dehydrogenase (KGDH) complex. The copmplex is composed of the catalytic subunits OGDH (2-oxoglutarate dehydrogenase KGD1; also called E1 subunit), DLST (dihydrolipoamide succinyltransferase KGD2; also called E2 subunit) and DLD (dihydrolipoamide dehydrogenase LPD1; also called E3 subunit), and the assembly factor KGD4. Within OGDC, interacts (via N-terminus) with E3 subunit and (via C-terminus) with the complex core formed by E1 and E2 subunits.</text>
</comment>
<comment type="interaction">
    <interactant intactId="EBI-16295">
        <id>P19955</id>
    </interactant>
    <interactant intactId="EBI-12459">
        <id>P20967</id>
        <label>KGD1</label>
    </interactant>
    <organismsDiffer>false</organismsDiffer>
    <experiments>6</experiments>
</comment>
<comment type="interaction">
    <interactant intactId="EBI-16295">
        <id>P19955</id>
    </interactant>
    <interactant intactId="EBI-5940">
        <id>P09624</id>
        <label>LPD1</label>
    </interactant>
    <organismsDiffer>false</organismsDiffer>
    <experiments>6</experiments>
</comment>
<comment type="subcellular location">
    <subcellularLocation>
        <location evidence="1 3 4">Mitochondrion</location>
    </subcellularLocation>
</comment>
<comment type="alternative products">
    <event type="alternative initiation"/>
    <isoform>
        <id>P19955-1</id>
        <name>1</name>
        <name evidence="9">Kgd4S</name>
        <sequence type="displayed"/>
    </isoform>
    <isoform>
        <id>P19955-2</id>
        <name>2</name>
        <name evidence="9">Kgd4L</name>
        <sequence type="described" ref="VSP_061954"/>
    </isoform>
    <text evidence="6">Isoform 2 derives from alternative initiation at an upstream UUG codon. The sequence context surrounding the codons dictates their use as alternative start sites.</text>
</comment>
<comment type="disruption phenotype">
    <text evidence="4">Decreases OGDH activity in vitro without destabilizing the catalytic subunits.</text>
</comment>
<comment type="miscellaneous">
    <text evidence="2">Present with 2050 molecules/cell in log phase SD medium.</text>
</comment>
<comment type="similarity">
    <text evidence="10">Belongs to the alpha-ketoglutarate dehydrogenase component 4 family.</text>
</comment>
<comment type="caution">
    <text evidence="4 5 10">Was originally identified in the small subunit (28S) of mitochondrial ribosomes that were purified on sucrose gradients (PubMed:2693936). This observation has been challenged by experiments showing YMR31 copurification with the oxoglutarate dehydrogenase complex (OGDC), also called alpha-ketoglutarate dehydrogenase complex (KGDH). Both mitochondrial ribosome 28S subunit and OGDC have a similar size and OGDC is highly abundant, therefore OGDC has been found to contaminate ribosomal preparations performed by sequential centrifugation steps (PubMed:25165143). In addition, YMR31 could not be located in the structure of the yeast mitochondrial ribosome, supporting the hypothesis that it is not a mitoribosomal protein.</text>
</comment>
<accession>P19955</accession>
<accession>D6VTT2</accession>
<gene>
    <name evidence="8" type="primary">YMR31</name>
    <name evidence="7" type="synonym">KGD4</name>
    <name type="ordered locus">YFR049W</name>
</gene>
<feature type="transit peptide" description="Mitochondrion" evidence="5">
    <location>
        <begin position="1"/>
        <end position="8"/>
    </location>
</feature>
<feature type="chain" id="PRO_0000030587" description="Alpha-ketoglutarate dehydrogenase subunit 4, mitochondrial">
    <location>
        <begin position="9"/>
        <end position="123"/>
    </location>
</feature>
<feature type="splice variant" id="VSP_061954" description="In isoform 2.">
    <original>M</original>
    <variation>MNSLKQTIKEYFPRFLTDNKSKIKVQEDREM</variation>
    <location>
        <position position="1"/>
    </location>
</feature>
<proteinExistence type="evidence at protein level"/>
<organism>
    <name type="scientific">Saccharomyces cerevisiae (strain ATCC 204508 / S288c)</name>
    <name type="common">Baker's yeast</name>
    <dbReference type="NCBI Taxonomy" id="559292"/>
    <lineage>
        <taxon>Eukaryota</taxon>
        <taxon>Fungi</taxon>
        <taxon>Dikarya</taxon>
        <taxon>Ascomycota</taxon>
        <taxon>Saccharomycotina</taxon>
        <taxon>Saccharomycetes</taxon>
        <taxon>Saccharomycetales</taxon>
        <taxon>Saccharomycetaceae</taxon>
        <taxon>Saccharomyces</taxon>
    </lineage>
</organism>
<evidence type="ECO:0000269" key="1">
    <source>
    </source>
</evidence>
<evidence type="ECO:0000269" key="2">
    <source>
    </source>
</evidence>
<evidence type="ECO:0000269" key="3">
    <source>
    </source>
</evidence>
<evidence type="ECO:0000269" key="4">
    <source>
    </source>
</evidence>
<evidence type="ECO:0000269" key="5">
    <source>
    </source>
</evidence>
<evidence type="ECO:0000269" key="6">
    <source>
    </source>
</evidence>
<evidence type="ECO:0000303" key="7">
    <source>
    </source>
</evidence>
<evidence type="ECO:0000303" key="8">
    <source>
    </source>
</evidence>
<evidence type="ECO:0000303" key="9">
    <source>
    </source>
</evidence>
<evidence type="ECO:0000305" key="10"/>
<keyword id="KW-0024">Alternative initiation</keyword>
<keyword id="KW-0903">Direct protein sequencing</keyword>
<keyword id="KW-0496">Mitochondrion</keyword>
<keyword id="KW-1185">Reference proteome</keyword>
<keyword id="KW-0809">Transit peptide</keyword>